<reference key="1">
    <citation type="journal article" date="1995" name="Eur. J. Biochem.">
        <title>Resolution of the nirD locus for heme d1 synthesis of cytochrome cd1 (respiratory nitrite reductase) from Pseudomonas stutzeri.</title>
        <authorList>
            <person name="Palmedo G."/>
            <person name="Seither P."/>
            <person name="Koerner H."/>
            <person name="Matthews J.C."/>
            <person name="Burkhalter R.S."/>
            <person name="Timkovich R."/>
            <person name="Zumft W.G."/>
        </authorList>
    </citation>
    <scope>NUCLEOTIDE SEQUENCE [GENOMIC DNA]</scope>
    <scope>DISRUPTION PHENOTYPE</scope>
    <source>
        <strain>ATCC 14405 / JCM 20778 / CIP 107696 / IAM 12931 / LMG 2243 / NCIMB 568 / Baumann 218 / ZoBell 632</strain>
    </source>
</reference>
<feature type="chain" id="PRO_0000021815" description="Siroheme decarboxylase NirD subunit">
    <location>
        <begin position="1"/>
        <end position="152"/>
    </location>
</feature>
<accession>Q52522</accession>
<name>NIRD_STUST</name>
<evidence type="ECO:0000250" key="1">
    <source>
        <dbReference type="UniProtKB" id="I6UH61"/>
    </source>
</evidence>
<evidence type="ECO:0000269" key="2">
    <source>
    </source>
</evidence>
<evidence type="ECO:0000303" key="3">
    <source>
    </source>
</evidence>
<evidence type="ECO:0000305" key="4"/>
<protein>
    <recommendedName>
        <fullName evidence="4">Siroheme decarboxylase NirD subunit</fullName>
        <ecNumber evidence="1">4.1.1.111</ecNumber>
    </recommendedName>
</protein>
<proteinExistence type="inferred from homology"/>
<keyword id="KW-0456">Lyase</keyword>
<comment type="function">
    <text evidence="1">Involved in heme d1 biosynthesis. Catalyzes the decarboxylation of siroheme into didecarboxysiroheme.</text>
</comment>
<comment type="catalytic activity">
    <reaction evidence="1">
        <text>siroheme + 2 H(+) = 12,18-didecarboxysiroheme + 2 CO2</text>
        <dbReference type="Rhea" id="RHEA:19093"/>
        <dbReference type="ChEBI" id="CHEBI:15378"/>
        <dbReference type="ChEBI" id="CHEBI:16526"/>
        <dbReference type="ChEBI" id="CHEBI:60052"/>
        <dbReference type="ChEBI" id="CHEBI:140497"/>
        <dbReference type="EC" id="4.1.1.111"/>
    </reaction>
</comment>
<comment type="pathway">
    <text evidence="1">Porphyrin-containing compound metabolism.</text>
</comment>
<comment type="subunit">
    <text evidence="1">Probably forms a complex composed of NirD, NirL, NirG and NirH. All proteins are required for the total conversion of siroheme to didecarboxysiroheme.</text>
</comment>
<comment type="disruption phenotype">
    <text evidence="2">Insertional mutagenesis results in the loss of respiratory nitrite reductase activity in vivo and in vitro. Mutant strains synthesize a periplasmic cytochrome cd1 that lacks heme d1.</text>
</comment>
<comment type="similarity">
    <text evidence="4">Belongs to the Ahb/Nir family.</text>
</comment>
<dbReference type="EC" id="4.1.1.111" evidence="1"/>
<dbReference type="EMBL" id="X53676">
    <property type="protein sequence ID" value="CAA90579.1"/>
    <property type="molecule type" value="Genomic_DNA"/>
</dbReference>
<dbReference type="PIR" id="S68353">
    <property type="entry name" value="S68353"/>
</dbReference>
<dbReference type="RefSeq" id="WP_003279935.1">
    <property type="nucleotide sequence ID" value="NZ_CP036186.1"/>
</dbReference>
<dbReference type="SMR" id="Q52522"/>
<dbReference type="GO" id="GO:0016829">
    <property type="term" value="F:lyase activity"/>
    <property type="evidence" value="ECO:0007669"/>
    <property type="project" value="UniProtKB-KW"/>
</dbReference>
<dbReference type="Gene3D" id="3.30.70.3460">
    <property type="match status" value="1"/>
</dbReference>
<dbReference type="InterPro" id="IPR040523">
    <property type="entry name" value="AsnC_trans_reg2"/>
</dbReference>
<dbReference type="InterPro" id="IPR050684">
    <property type="entry name" value="HTH-Siroheme_Decarb"/>
</dbReference>
<dbReference type="InterPro" id="IPR053953">
    <property type="entry name" value="NirdL-like_HTH"/>
</dbReference>
<dbReference type="PANTHER" id="PTHR43413:SF1">
    <property type="entry name" value="SIROHEME DECARBOXYLASE NIRL SUBUNIT"/>
    <property type="match status" value="1"/>
</dbReference>
<dbReference type="PANTHER" id="PTHR43413">
    <property type="entry name" value="TRANSCRIPTIONAL REGULATOR, ASNC FAMILY"/>
    <property type="match status" value="1"/>
</dbReference>
<dbReference type="Pfam" id="PF17805">
    <property type="entry name" value="AsnC_trans_reg2"/>
    <property type="match status" value="1"/>
</dbReference>
<dbReference type="Pfam" id="PF22451">
    <property type="entry name" value="NirdL-like_HTH"/>
    <property type="match status" value="1"/>
</dbReference>
<gene>
    <name evidence="3" type="primary">nirD</name>
</gene>
<sequence length="152" mass="16852">MHIDALSRRLIDRYQHGMPLCAEPYRAMAEELGCSEGEVLACLEQLQEDGGLSRIGPVFEHSRAGASTLVALAVPEARLEQVAARINAFPEVNHNYLREHRYNLWFVLTGPDRAHIDALLAEIEADTGLVPLDLPMLHAFRIDLGFPLGDPS</sequence>
<organism>
    <name type="scientific">Stutzerimonas stutzeri</name>
    <name type="common">Pseudomonas stutzeri</name>
    <dbReference type="NCBI Taxonomy" id="316"/>
    <lineage>
        <taxon>Bacteria</taxon>
        <taxon>Pseudomonadati</taxon>
        <taxon>Pseudomonadota</taxon>
        <taxon>Gammaproteobacteria</taxon>
        <taxon>Pseudomonadales</taxon>
        <taxon>Pseudomonadaceae</taxon>
        <taxon>Stutzerimonas</taxon>
    </lineage>
</organism>